<proteinExistence type="inferred from homology"/>
<gene>
    <name type="primary">wecA</name>
    <name type="synonym">rfe</name>
    <name type="ordered locus">MT1341</name>
</gene>
<organism>
    <name type="scientific">Mycobacterium tuberculosis (strain CDC 1551 / Oshkosh)</name>
    <dbReference type="NCBI Taxonomy" id="83331"/>
    <lineage>
        <taxon>Bacteria</taxon>
        <taxon>Bacillati</taxon>
        <taxon>Actinomycetota</taxon>
        <taxon>Actinomycetes</taxon>
        <taxon>Mycobacteriales</taxon>
        <taxon>Mycobacteriaceae</taxon>
        <taxon>Mycobacterium</taxon>
        <taxon>Mycobacterium tuberculosis complex</taxon>
    </lineage>
</organism>
<protein>
    <recommendedName>
        <fullName>Decaprenyl-phosphate N-acetylglucosaminephosphotransferase</fullName>
        <ecNumber>2.7.8.35</ecNumber>
    </recommendedName>
    <alternativeName>
        <fullName>Decaprenyl-phosphate GlcNAc-1-phosphate transferase</fullName>
    </alternativeName>
    <alternativeName>
        <fullName>Decaprenyl-phosphate alpha-N-acetylglucosaminyl 1-phosphate transferase</fullName>
    </alternativeName>
    <alternativeName>
        <fullName>UDP-GlcNAc:decaprenyl-phosphate GlcNAc-1-phosphate transferase</fullName>
    </alternativeName>
</protein>
<evidence type="ECO:0000250" key="1"/>
<evidence type="ECO:0000255" key="2"/>
<evidence type="ECO:0000305" key="3"/>
<name>WECA_MYCTO</name>
<accession>P9WMW4</accession>
<accession>L0T8Z6</accession>
<accession>Q10606</accession>
<dbReference type="EC" id="2.7.8.35"/>
<dbReference type="EMBL" id="AE000516">
    <property type="protein sequence ID" value="AAK45603.1"/>
    <property type="status" value="ALT_INIT"/>
    <property type="molecule type" value="Genomic_DNA"/>
</dbReference>
<dbReference type="PIR" id="B70774">
    <property type="entry name" value="B70774"/>
</dbReference>
<dbReference type="RefSeq" id="WP_003898816.1">
    <property type="nucleotide sequence ID" value="NZ_KK341227.1"/>
</dbReference>
<dbReference type="SMR" id="P9WMW4"/>
<dbReference type="GeneID" id="45425276"/>
<dbReference type="KEGG" id="mtc:MT1341"/>
<dbReference type="PATRIC" id="fig|83331.31.peg.1448"/>
<dbReference type="HOGENOM" id="CLU_023982_2_2_11"/>
<dbReference type="UniPathway" id="UPA00963"/>
<dbReference type="Proteomes" id="UP000001020">
    <property type="component" value="Chromosome"/>
</dbReference>
<dbReference type="GO" id="GO:0005886">
    <property type="term" value="C:plasma membrane"/>
    <property type="evidence" value="ECO:0007669"/>
    <property type="project" value="UniProtKB-SubCell"/>
</dbReference>
<dbReference type="GO" id="GO:0016757">
    <property type="term" value="F:glycosyltransferase activity"/>
    <property type="evidence" value="ECO:0007669"/>
    <property type="project" value="UniProtKB-KW"/>
</dbReference>
<dbReference type="GO" id="GO:0016780">
    <property type="term" value="F:phosphotransferase activity, for other substituted phosphate groups"/>
    <property type="evidence" value="ECO:0007669"/>
    <property type="project" value="InterPro"/>
</dbReference>
<dbReference type="GO" id="GO:0045227">
    <property type="term" value="P:capsule polysaccharide biosynthetic process"/>
    <property type="evidence" value="ECO:0007669"/>
    <property type="project" value="UniProtKB-UniPathway"/>
</dbReference>
<dbReference type="GO" id="GO:0044038">
    <property type="term" value="P:cell wall macromolecule biosynthetic process"/>
    <property type="evidence" value="ECO:0007669"/>
    <property type="project" value="TreeGrafter"/>
</dbReference>
<dbReference type="GO" id="GO:0071555">
    <property type="term" value="P:cell wall organization"/>
    <property type="evidence" value="ECO:0007669"/>
    <property type="project" value="UniProtKB-KW"/>
</dbReference>
<dbReference type="GO" id="GO:0009103">
    <property type="term" value="P:lipopolysaccharide biosynthetic process"/>
    <property type="evidence" value="ECO:0007669"/>
    <property type="project" value="TreeGrafter"/>
</dbReference>
<dbReference type="CDD" id="cd06853">
    <property type="entry name" value="GT_WecA_like"/>
    <property type="match status" value="1"/>
</dbReference>
<dbReference type="InterPro" id="IPR000715">
    <property type="entry name" value="Glycosyl_transferase_4"/>
</dbReference>
<dbReference type="PANTHER" id="PTHR22926">
    <property type="entry name" value="PHOSPHO-N-ACETYLMURAMOYL-PENTAPEPTIDE-TRANSFERASE"/>
    <property type="match status" value="1"/>
</dbReference>
<dbReference type="PANTHER" id="PTHR22926:SF3">
    <property type="entry name" value="UNDECAPRENYL-PHOSPHATE ALPHA-N-ACETYLGLUCOSAMINYL 1-PHOSPHATE TRANSFERASE"/>
    <property type="match status" value="1"/>
</dbReference>
<dbReference type="Pfam" id="PF00953">
    <property type="entry name" value="Glycos_transf_4"/>
    <property type="match status" value="1"/>
</dbReference>
<feature type="chain" id="PRO_0000427231" description="Decaprenyl-phosphate N-acetylglucosaminephosphotransferase">
    <location>
        <begin position="1"/>
        <end position="404"/>
    </location>
</feature>
<feature type="transmembrane region" description="Helical" evidence="2">
    <location>
        <begin position="33"/>
        <end position="53"/>
    </location>
</feature>
<feature type="transmembrane region" description="Helical" evidence="2">
    <location>
        <begin position="79"/>
        <end position="99"/>
    </location>
</feature>
<feature type="transmembrane region" description="Helical" evidence="2">
    <location>
        <begin position="105"/>
        <end position="125"/>
    </location>
</feature>
<feature type="transmembrane region" description="Helical" evidence="2">
    <location>
        <begin position="148"/>
        <end position="168"/>
    </location>
</feature>
<feature type="transmembrane region" description="Helical" evidence="2">
    <location>
        <begin position="175"/>
        <end position="195"/>
    </location>
</feature>
<feature type="transmembrane region" description="Helical" evidence="2">
    <location>
        <begin position="198"/>
        <end position="218"/>
    </location>
</feature>
<feature type="transmembrane region" description="Helical" evidence="2">
    <location>
        <begin position="225"/>
        <end position="245"/>
    </location>
</feature>
<feature type="transmembrane region" description="Helical" evidence="2">
    <location>
        <begin position="259"/>
        <end position="279"/>
    </location>
</feature>
<feature type="transmembrane region" description="Helical" evidence="2">
    <location>
        <begin position="295"/>
        <end position="315"/>
    </location>
</feature>
<feature type="transmembrane region" description="Helical" evidence="2">
    <location>
        <begin position="347"/>
        <end position="367"/>
    </location>
</feature>
<feature type="transmembrane region" description="Helical" evidence="2">
    <location>
        <begin position="372"/>
        <end position="392"/>
    </location>
</feature>
<feature type="site" description="Important in orienting the substrate" evidence="1">
    <location>
        <position position="126"/>
    </location>
</feature>
<feature type="site" description="Important in orienting the substrate; probably interacts with magnesium or manganese" evidence="1">
    <location>
        <position position="127"/>
    </location>
</feature>
<feature type="site" description="Could be required for catalysis" evidence="1">
    <location>
        <position position="193"/>
    </location>
</feature>
<feature type="site" description="Could be required for catalysis" evidence="1">
    <location>
        <position position="196"/>
    </location>
</feature>
<comment type="function">
    <text evidence="1">Involved in the biosynthesis of the disaccharide D-N-acetylglucosamine-L-rhamnose which plays an important role in the mycobacterial cell wall as a linker connecting arabinogalactan and peptidoglycan via a phosphodiester linkage. Catalyzes the transfer of the N-acetylglucosamine-1-phosphate (GlcNAc-1P) moiety from UDP-GlcNAc onto the carrier lipid decaprenyl phosphate (C50-P), yielding GlcNAc-pyrophosphoryl-decaprenyl (GlcNAc-PP-C50) (By similarity).</text>
</comment>
<comment type="catalytic activity">
    <reaction>
        <text>trans,octa-cis-decaprenyl phosphate + UDP-N-acetyl-alpha-D-glucosamine = N-acetyl-alpha-D-glucosaminyl-1-diphospho-trans,octa-cis-decaprenol + UMP</text>
        <dbReference type="Rhea" id="RHEA:34071"/>
        <dbReference type="ChEBI" id="CHEBI:57705"/>
        <dbReference type="ChEBI" id="CHEBI:57865"/>
        <dbReference type="ChEBI" id="CHEBI:65079"/>
        <dbReference type="ChEBI" id="CHEBI:65080"/>
        <dbReference type="EC" id="2.7.8.35"/>
    </reaction>
</comment>
<comment type="cofactor">
    <cofactor evidence="1">
        <name>Mg(2+)</name>
        <dbReference type="ChEBI" id="CHEBI:18420"/>
    </cofactor>
</comment>
<comment type="cofactor">
    <cofactor evidence="1">
        <name>Mn(2+)</name>
        <dbReference type="ChEBI" id="CHEBI:29035"/>
    </cofactor>
</comment>
<comment type="pathway">
    <text>Cell wall biogenesis; cell wall polysaccharide biosynthesis.</text>
</comment>
<comment type="subcellular location">
    <subcellularLocation>
        <location evidence="1">Cell membrane</location>
        <topology evidence="1">Multi-pass membrane protein</topology>
    </subcellularLocation>
</comment>
<comment type="similarity">
    <text evidence="3">Belongs to the glycosyltransferase 4 family. WecA subfamily.</text>
</comment>
<comment type="sequence caution" evidence="3">
    <conflict type="erroneous initiation">
        <sequence resource="EMBL-CDS" id="AAK45603"/>
    </conflict>
    <text>Truncated N-terminus.</text>
</comment>
<keyword id="KW-1003">Cell membrane</keyword>
<keyword id="KW-0961">Cell wall biogenesis/degradation</keyword>
<keyword id="KW-0328">Glycosyltransferase</keyword>
<keyword id="KW-0460">Magnesium</keyword>
<keyword id="KW-0464">Manganese</keyword>
<keyword id="KW-0472">Membrane</keyword>
<keyword id="KW-1185">Reference proteome</keyword>
<keyword id="KW-0808">Transferase</keyword>
<keyword id="KW-0812">Transmembrane</keyword>
<keyword id="KW-1133">Transmembrane helix</keyword>
<sequence>MQYGLEVSSDVAGVAGGLLALSYRGAGVPLRELALVGLTAAIITYFATGPVRMLASRLGAVAYPRERDVHVTPTPRMGGLAMFLGIVGAVFLASQLPALTRGFVYSTGMPAVLVAGAVIMGIGLIDDRWGLDALTKFAGQITAASVLVTMGVAWSVLYIPVGGVGTIVLDQASSILLTLALTVSIVNAMNFVDGLDGLAAGLGLITALAICMFSVGLLRDHGGDVLYYPPAVISVVLAGACLGFLPHNFHRAKIFMGDSGSMLIGLMLAAASTTAAGPISQNAYGARDVFALLSPFLLVVAVMFVPMLDLLLAIVRRTRAGRSAFSPDKMHLHHRLLQIGHSHRRVVLIIYLWVGIVAFGAASSIFFNPRDTAAVMLGAIVVAGVATLIPLLRRGDDYYDPDLD</sequence>
<reference key="1">
    <citation type="journal article" date="2002" name="J. Bacteriol.">
        <title>Whole-genome comparison of Mycobacterium tuberculosis clinical and laboratory strains.</title>
        <authorList>
            <person name="Fleischmann R.D."/>
            <person name="Alland D."/>
            <person name="Eisen J.A."/>
            <person name="Carpenter L."/>
            <person name="White O."/>
            <person name="Peterson J.D."/>
            <person name="DeBoy R.T."/>
            <person name="Dodson R.J."/>
            <person name="Gwinn M.L."/>
            <person name="Haft D.H."/>
            <person name="Hickey E.K."/>
            <person name="Kolonay J.F."/>
            <person name="Nelson W.C."/>
            <person name="Umayam L.A."/>
            <person name="Ermolaeva M.D."/>
            <person name="Salzberg S.L."/>
            <person name="Delcher A."/>
            <person name="Utterback T.R."/>
            <person name="Weidman J.F."/>
            <person name="Khouri H.M."/>
            <person name="Gill J."/>
            <person name="Mikula A."/>
            <person name="Bishai W."/>
            <person name="Jacobs W.R. Jr."/>
            <person name="Venter J.C."/>
            <person name="Fraser C.M."/>
        </authorList>
    </citation>
    <scope>NUCLEOTIDE SEQUENCE [LARGE SCALE GENOMIC DNA]</scope>
    <source>
        <strain>CDC 1551 / Oshkosh</strain>
    </source>
</reference>